<organism>
    <name type="scientific">Protobothrops flavoviridis</name>
    <name type="common">Habu</name>
    <name type="synonym">Trimeresurus flavoviridis</name>
    <dbReference type="NCBI Taxonomy" id="88087"/>
    <lineage>
        <taxon>Eukaryota</taxon>
        <taxon>Metazoa</taxon>
        <taxon>Chordata</taxon>
        <taxon>Craniata</taxon>
        <taxon>Vertebrata</taxon>
        <taxon>Euteleostomi</taxon>
        <taxon>Lepidosauria</taxon>
        <taxon>Squamata</taxon>
        <taxon>Bifurcata</taxon>
        <taxon>Unidentata</taxon>
        <taxon>Episquamata</taxon>
        <taxon>Toxicofera</taxon>
        <taxon>Serpentes</taxon>
        <taxon>Colubroidea</taxon>
        <taxon>Viperidae</taxon>
        <taxon>Crotalinae</taxon>
        <taxon>Protobothrops</taxon>
    </lineage>
</organism>
<dbReference type="EC" id="3.4.24.-"/>
<dbReference type="EMBL" id="AB052155">
    <property type="protein sequence ID" value="BAC00515.1"/>
    <property type="molecule type" value="mRNA"/>
</dbReference>
<dbReference type="PIR" id="A58649">
    <property type="entry name" value="A58649"/>
</dbReference>
<dbReference type="PDB" id="1FVL">
    <property type="method" value="NMR"/>
    <property type="chains" value="A=414-483"/>
</dbReference>
<dbReference type="PDBsum" id="1FVL"/>
<dbReference type="SMR" id="P18619"/>
<dbReference type="MEROPS" id="M12.155"/>
<dbReference type="EvolutionaryTrace" id="P18619"/>
<dbReference type="GO" id="GO:0005576">
    <property type="term" value="C:extracellular region"/>
    <property type="evidence" value="ECO:0007669"/>
    <property type="project" value="UniProtKB-SubCell"/>
</dbReference>
<dbReference type="GO" id="GO:0005886">
    <property type="term" value="C:plasma membrane"/>
    <property type="evidence" value="ECO:0007669"/>
    <property type="project" value="TreeGrafter"/>
</dbReference>
<dbReference type="GO" id="GO:0046872">
    <property type="term" value="F:metal ion binding"/>
    <property type="evidence" value="ECO:0007669"/>
    <property type="project" value="UniProtKB-KW"/>
</dbReference>
<dbReference type="GO" id="GO:0004222">
    <property type="term" value="F:metalloendopeptidase activity"/>
    <property type="evidence" value="ECO:0007669"/>
    <property type="project" value="InterPro"/>
</dbReference>
<dbReference type="GO" id="GO:0090729">
    <property type="term" value="F:toxin activity"/>
    <property type="evidence" value="ECO:0007669"/>
    <property type="project" value="UniProtKB-KW"/>
</dbReference>
<dbReference type="GO" id="GO:0006508">
    <property type="term" value="P:proteolysis"/>
    <property type="evidence" value="ECO:0007669"/>
    <property type="project" value="UniProtKB-KW"/>
</dbReference>
<dbReference type="CDD" id="cd04269">
    <property type="entry name" value="ZnMc_adamalysin_II_like"/>
    <property type="match status" value="1"/>
</dbReference>
<dbReference type="FunFam" id="3.40.390.10:FF:000002">
    <property type="entry name" value="Disintegrin and metalloproteinase domain-containing protein 22"/>
    <property type="match status" value="1"/>
</dbReference>
<dbReference type="FunFam" id="4.10.70.10:FF:000005">
    <property type="entry name" value="Zinc metalloproteinase/disintegrin"/>
    <property type="match status" value="1"/>
</dbReference>
<dbReference type="Gene3D" id="3.40.390.10">
    <property type="entry name" value="Collagenase (Catalytic Domain)"/>
    <property type="match status" value="1"/>
</dbReference>
<dbReference type="Gene3D" id="4.10.70.10">
    <property type="entry name" value="Disintegrin domain"/>
    <property type="match status" value="1"/>
</dbReference>
<dbReference type="InterPro" id="IPR018358">
    <property type="entry name" value="Disintegrin_CS"/>
</dbReference>
<dbReference type="InterPro" id="IPR001762">
    <property type="entry name" value="Disintegrin_dom"/>
</dbReference>
<dbReference type="InterPro" id="IPR036436">
    <property type="entry name" value="Disintegrin_dom_sf"/>
</dbReference>
<dbReference type="InterPro" id="IPR024079">
    <property type="entry name" value="MetalloPept_cat_dom_sf"/>
</dbReference>
<dbReference type="InterPro" id="IPR001590">
    <property type="entry name" value="Peptidase_M12B"/>
</dbReference>
<dbReference type="InterPro" id="IPR002870">
    <property type="entry name" value="Peptidase_M12B_N"/>
</dbReference>
<dbReference type="InterPro" id="IPR034027">
    <property type="entry name" value="Reprolysin_adamalysin"/>
</dbReference>
<dbReference type="PANTHER" id="PTHR11905">
    <property type="entry name" value="ADAM A DISINTEGRIN AND METALLOPROTEASE DOMAIN"/>
    <property type="match status" value="1"/>
</dbReference>
<dbReference type="PANTHER" id="PTHR11905:SF32">
    <property type="entry name" value="DISINTEGRIN AND METALLOPROTEINASE DOMAIN-CONTAINING PROTEIN 28"/>
    <property type="match status" value="1"/>
</dbReference>
<dbReference type="Pfam" id="PF00200">
    <property type="entry name" value="Disintegrin"/>
    <property type="match status" value="1"/>
</dbReference>
<dbReference type="Pfam" id="PF01562">
    <property type="entry name" value="Pep_M12B_propep"/>
    <property type="match status" value="1"/>
</dbReference>
<dbReference type="Pfam" id="PF01421">
    <property type="entry name" value="Reprolysin"/>
    <property type="match status" value="1"/>
</dbReference>
<dbReference type="PRINTS" id="PR00289">
    <property type="entry name" value="DISINTEGRIN"/>
</dbReference>
<dbReference type="SMART" id="SM00050">
    <property type="entry name" value="DISIN"/>
    <property type="match status" value="1"/>
</dbReference>
<dbReference type="SUPFAM" id="SSF57552">
    <property type="entry name" value="Blood coagulation inhibitor (disintegrin)"/>
    <property type="match status" value="1"/>
</dbReference>
<dbReference type="SUPFAM" id="SSF55486">
    <property type="entry name" value="Metalloproteases ('zincins'), catalytic domain"/>
    <property type="match status" value="1"/>
</dbReference>
<dbReference type="PROSITE" id="PS50215">
    <property type="entry name" value="ADAM_MEPRO"/>
    <property type="match status" value="1"/>
</dbReference>
<dbReference type="PROSITE" id="PS00427">
    <property type="entry name" value="DISINTEGRIN_1"/>
    <property type="match status" value="1"/>
</dbReference>
<dbReference type="PROSITE" id="PS50214">
    <property type="entry name" value="DISINTEGRIN_2"/>
    <property type="match status" value="1"/>
</dbReference>
<dbReference type="PROSITE" id="PS00142">
    <property type="entry name" value="ZINC_PROTEASE"/>
    <property type="match status" value="1"/>
</dbReference>
<protein>
    <recommendedName>
        <fullName>Zinc metalloproteinase/disintegrin</fullName>
    </recommendedName>
    <component>
        <recommendedName>
            <fullName>Snake venom metalloproteinase</fullName>
            <shortName>SVMP</shortName>
            <ecNumber>3.4.24.-</ecNumber>
        </recommendedName>
    </component>
    <component>
        <recommendedName>
            <fullName>Disintegrin flavoridin</fullName>
        </recommendedName>
    </component>
</protein>
<keyword id="KW-0002">3D-structure</keyword>
<keyword id="KW-0106">Calcium</keyword>
<keyword id="KW-1217">Cell adhesion impairing toxin</keyword>
<keyword id="KW-0903">Direct protein sequencing</keyword>
<keyword id="KW-1015">Disulfide bond</keyword>
<keyword id="KW-0325">Glycoprotein</keyword>
<keyword id="KW-1199">Hemostasis impairing toxin</keyword>
<keyword id="KW-0378">Hydrolase</keyword>
<keyword id="KW-0479">Metal-binding</keyword>
<keyword id="KW-0482">Metalloprotease</keyword>
<keyword id="KW-1201">Platelet aggregation inhibiting toxin</keyword>
<keyword id="KW-0645">Protease</keyword>
<keyword id="KW-0964">Secreted</keyword>
<keyword id="KW-0732">Signal</keyword>
<keyword id="KW-0800">Toxin</keyword>
<keyword id="KW-0862">Zinc</keyword>
<keyword id="KW-0865">Zymogen</keyword>
<sequence length="483" mass="54514">MIQVLLVTICLAVFPYQGSSIILESGNVNDYEVVYPRKVTALPKRAVQQKYEDAMQYELKVNGEPVVLHLEKNKGLFSEDYSETHYSPDGREITTYPSVEDHCYYHGRIHNDADSTASISACDGLKGYFKLQGETYLIEPLKLSDSEAHAVYKYENIEKEDEAPKMCGVTQNWESDESIKKASQLYLTPEQQRFPQRYIELAIVVDHGMYKKYNHDSDKIKVRVHQMVNHINEMYRPLNIAITLSLLQIWSNKDLITVKSASNVTLNLFGNWRETVLLKRRSHDCAHLLTDINFTGNIIGLAYKQGMCNPKLSVGLVQDYSSNVFVVAVIMTHELGHNLGMEHDEEKNGKKCNCKTCIMSPAISDPPAQLFSDCSKNDYHTFLTNRNPQCILNAPLRTDTVSTPVSGNEFLEAGEECDCGSPSNPCCDAATCKLRPGAQCADGLCCDQCRFKKKRTICRIARGDFPDDRCTGLSNDCPRWNDL</sequence>
<proteinExistence type="evidence at protein level"/>
<feature type="signal peptide" evidence="2">
    <location>
        <begin position="1"/>
        <end position="20"/>
    </location>
</feature>
<feature type="propeptide" id="PRO_0000028996" evidence="1">
    <location>
        <begin position="21"/>
        <end position="190"/>
    </location>
</feature>
<feature type="chain" id="PRO_0000028997" description="Snake venom metalloproteinase">
    <location>
        <begin position="191"/>
        <end position="395"/>
    </location>
</feature>
<feature type="propeptide" id="PRO_0000028998" evidence="10 11">
    <location>
        <begin position="396"/>
        <end position="413"/>
    </location>
</feature>
<feature type="chain" id="PRO_0000028999" description="Disintegrin flavoridin" evidence="5 6">
    <location>
        <begin position="414"/>
        <end position="483"/>
    </location>
</feature>
<feature type="domain" description="Peptidase M12B" evidence="4">
    <location>
        <begin position="197"/>
        <end position="395"/>
    </location>
</feature>
<feature type="domain" description="Disintegrin" evidence="3">
    <location>
        <begin position="403"/>
        <end position="483"/>
    </location>
</feature>
<feature type="short sequence motif" description="Cell attachment site">
    <location>
        <begin position="462"/>
        <end position="464"/>
    </location>
</feature>
<feature type="active site" evidence="4">
    <location>
        <position position="334"/>
    </location>
</feature>
<feature type="binding site" evidence="1">
    <location>
        <position position="200"/>
    </location>
    <ligand>
        <name>Ca(2+)</name>
        <dbReference type="ChEBI" id="CHEBI:29108"/>
    </ligand>
</feature>
<feature type="binding site" evidence="1">
    <location>
        <position position="284"/>
    </location>
    <ligand>
        <name>Ca(2+)</name>
        <dbReference type="ChEBI" id="CHEBI:29108"/>
    </ligand>
</feature>
<feature type="binding site" evidence="4">
    <location>
        <position position="333"/>
    </location>
    <ligand>
        <name>Zn(2+)</name>
        <dbReference type="ChEBI" id="CHEBI:29105"/>
        <note>catalytic</note>
    </ligand>
</feature>
<feature type="binding site" evidence="4">
    <location>
        <position position="337"/>
    </location>
    <ligand>
        <name>Zn(2+)</name>
        <dbReference type="ChEBI" id="CHEBI:29105"/>
        <note>catalytic</note>
    </ligand>
</feature>
<feature type="binding site" evidence="4">
    <location>
        <position position="343"/>
    </location>
    <ligand>
        <name>Zn(2+)</name>
        <dbReference type="ChEBI" id="CHEBI:29105"/>
        <note>catalytic</note>
    </ligand>
</feature>
<feature type="binding site" evidence="1">
    <location>
        <position position="390"/>
    </location>
    <ligand>
        <name>Ca(2+)</name>
        <dbReference type="ChEBI" id="CHEBI:29108"/>
    </ligand>
</feature>
<feature type="binding site" evidence="1">
    <location>
        <position position="393"/>
    </location>
    <ligand>
        <name>Ca(2+)</name>
        <dbReference type="ChEBI" id="CHEBI:29108"/>
    </ligand>
</feature>
<feature type="glycosylation site" description="N-linked (GlcNAc...) asparagine" evidence="2">
    <location>
        <position position="263"/>
    </location>
</feature>
<feature type="glycosylation site" description="N-linked (GlcNAc...) asparagine" evidence="2">
    <location>
        <position position="293"/>
    </location>
</feature>
<feature type="disulfide bond" evidence="4">
    <location>
        <begin position="308"/>
        <end position="390"/>
    </location>
</feature>
<feature type="disulfide bond" evidence="4">
    <location>
        <begin position="352"/>
        <end position="374"/>
    </location>
</feature>
<feature type="disulfide bond" evidence="4">
    <location>
        <begin position="354"/>
        <end position="357"/>
    </location>
</feature>
<feature type="disulfide bond" evidence="5 7 8 12">
    <location>
        <begin position="417"/>
        <end position="432"/>
    </location>
</feature>
<feature type="disulfide bond" evidence="5 7 8 12">
    <location>
        <begin position="419"/>
        <end position="427"/>
    </location>
</feature>
<feature type="disulfide bond" evidence="5 7 8 12">
    <location>
        <begin position="426"/>
        <end position="449"/>
    </location>
</feature>
<feature type="disulfide bond" evidence="5 7 8 12">
    <location>
        <begin position="440"/>
        <end position="446"/>
    </location>
</feature>
<feature type="disulfide bond" evidence="5 7 8 12">
    <location>
        <begin position="445"/>
        <end position="470"/>
    </location>
</feature>
<feature type="disulfide bond" evidence="4 5 7 8 12">
    <location>
        <begin position="458"/>
        <end position="477"/>
    </location>
</feature>
<feature type="sequence conflict" description="In Ref. 2; AA sequence." evidence="9" ref="2">
    <original>RT</original>
    <variation>TG</variation>
    <location>
        <begin position="455"/>
        <end position="456"/>
    </location>
</feature>
<feature type="turn" evidence="13">
    <location>
        <begin position="429"/>
        <end position="432"/>
    </location>
</feature>
<feature type="strand" evidence="13">
    <location>
        <begin position="444"/>
        <end position="446"/>
    </location>
</feature>
<feature type="strand" evidence="13">
    <location>
        <begin position="448"/>
        <end position="451"/>
    </location>
</feature>
<feature type="strand" evidence="13">
    <location>
        <begin position="457"/>
        <end position="459"/>
    </location>
</feature>
<feature type="strand" evidence="13">
    <location>
        <begin position="462"/>
        <end position="465"/>
    </location>
</feature>
<reference key="1">
    <citation type="journal article" date="2002" name="Toxicon">
        <title>Molecular cloning and sequence analysis of cDNA encoding flavoridin, a disintegrin from the venom of Trimeresurus flavoviridis.</title>
        <authorList>
            <person name="Kishimoto M."/>
            <person name="Takahashi T."/>
        </authorList>
    </citation>
    <scope>NUCLEOTIDE SEQUENCE [MRNA]</scope>
    <source>
        <tissue>Venom gland</tissue>
    </source>
</reference>
<reference key="2">
    <citation type="journal article" date="1990" name="Circulation">
        <title>Inhibition of platelet adhesion to surfaces of extracorporeal circuits by disintegrins. RGD-containing peptides from viper venoms.</title>
        <authorList>
            <person name="Musial J."/>
            <person name="Niewiarowski S."/>
            <person name="Rucinski B."/>
            <person name="Stewart G.J."/>
            <person name="Cook J.J."/>
            <person name="Williams J.A."/>
            <person name="Edmunds L.H. Jr."/>
        </authorList>
    </citation>
    <scope>PROTEIN SEQUENCE OF 414-483</scope>
    <scope>SUBCELLULAR LOCATION</scope>
    <source>
        <tissue>Venom</tissue>
    </source>
</reference>
<reference key="3">
    <citation type="journal article" date="1992" name="FEBS Lett.">
        <title>The disulfide bridge pattern of snake venom disintegrins, flavoridin and echistatin.</title>
        <authorList>
            <person name="Calvete J.J."/>
            <person name="Wang Y."/>
            <person name="Mann K."/>
            <person name="Schaefer W."/>
            <person name="Niewiarwoski S."/>
            <person name="Stewart G.J."/>
        </authorList>
    </citation>
    <scope>PROTEIN SEQUENCE OF 414-483</scope>
    <scope>SUBCELLULAR LOCATION</scope>
    <scope>DISULFIDE BONDS</scope>
    <source>
        <tissue>Venom</tissue>
    </source>
</reference>
<reference key="4">
    <citation type="journal article" date="1993" name="J. Mol. Biol.">
        <title>Determination of the disulphide bonding pattern in proteins by local and global analysis of nuclear magnetic resonance data. Application to flavoridin.</title>
        <authorList>
            <person name="Klaus W."/>
            <person name="Broger C."/>
            <person name="Gerber P."/>
            <person name="Senn H."/>
        </authorList>
    </citation>
    <scope>DISULFIDE BONDS IN DISINTEGRIN FLAVORIDIN</scope>
</reference>
<reference key="5">
    <citation type="journal article" date="1993" name="J. Mol. Biol.">
        <title>The nuclear magnetic resonance solution structure of flavoridin, an antagonist of the platelet GP IIb-IIIa receptor.</title>
        <authorList>
            <person name="Senn H."/>
            <person name="Klaus W."/>
        </authorList>
    </citation>
    <scope>STRUCTURE BY NMR OF 414-483</scope>
    <scope>DISULFIDE BONDS</scope>
</reference>
<accession>P18619</accession>
<accession>Q8JIS2</accession>
<evidence type="ECO:0000250" key="1"/>
<evidence type="ECO:0000255" key="2"/>
<evidence type="ECO:0000255" key="3">
    <source>
        <dbReference type="PROSITE-ProRule" id="PRU00068"/>
    </source>
</evidence>
<evidence type="ECO:0000255" key="4">
    <source>
        <dbReference type="PROSITE-ProRule" id="PRU00276"/>
    </source>
</evidence>
<evidence type="ECO:0000269" key="5">
    <source>
    </source>
</evidence>
<evidence type="ECO:0000269" key="6">
    <source>
    </source>
</evidence>
<evidence type="ECO:0000269" key="7">
    <source>
    </source>
</evidence>
<evidence type="ECO:0000269" key="8">
    <source>
    </source>
</evidence>
<evidence type="ECO:0000305" key="9"/>
<evidence type="ECO:0000305" key="10">
    <source>
    </source>
</evidence>
<evidence type="ECO:0000305" key="11">
    <source>
    </source>
</evidence>
<evidence type="ECO:0007744" key="12">
    <source>
        <dbReference type="PDB" id="1FVL"/>
    </source>
</evidence>
<evidence type="ECO:0007829" key="13">
    <source>
        <dbReference type="PDB" id="1FVL"/>
    </source>
</evidence>
<comment type="function">
    <molecule>Snake venom metalloproteinase</molecule>
    <text evidence="1">Impairs hemostasis in the envenomed animal.</text>
</comment>
<comment type="function">
    <molecule>Disintegrin flavoridin</molecule>
    <text evidence="1">Inhibits platelet aggregation induced by ADP, thrombin, platelet-activating factor and collagen. Acts by inhibiting fibrinogen interaction with platelet receptors GPIIb/GPIIIa (ITGA2B/ITGB3) (By similarity).</text>
</comment>
<comment type="cofactor">
    <cofactor evidence="1">
        <name>Zn(2+)</name>
        <dbReference type="ChEBI" id="CHEBI:29105"/>
    </cofactor>
    <text evidence="1">Binds 1 zinc ion per subunit.</text>
</comment>
<comment type="subunit">
    <text evidence="1">Monomeric (disintegrin).</text>
</comment>
<comment type="subcellular location">
    <subcellularLocation>
        <location evidence="5 6">Secreted</location>
    </subcellularLocation>
</comment>
<comment type="tissue specificity">
    <text>Expressed by the venom gland.</text>
</comment>
<comment type="miscellaneous">
    <text>The disintegrin belongs to the medium disintegrin subfamily.</text>
</comment>
<comment type="similarity">
    <text evidence="9">Belongs to the venom metalloproteinase (M12B) family. P-II subfamily. P-IIa sub-subfamily.</text>
</comment>
<name>VM2FL_PROFL</name>